<keyword id="KW-0687">Ribonucleoprotein</keyword>
<keyword id="KW-0689">Ribosomal protein</keyword>
<keyword id="KW-0694">RNA-binding</keyword>
<keyword id="KW-0699">rRNA-binding</keyword>
<gene>
    <name evidence="1" type="primary">rpsT</name>
    <name type="ordered locus">CAB973</name>
</gene>
<organism>
    <name type="scientific">Chlamydia abortus (strain DSM 27085 / S26/3)</name>
    <name type="common">Chlamydophila abortus</name>
    <dbReference type="NCBI Taxonomy" id="218497"/>
    <lineage>
        <taxon>Bacteria</taxon>
        <taxon>Pseudomonadati</taxon>
        <taxon>Chlamydiota</taxon>
        <taxon>Chlamydiia</taxon>
        <taxon>Chlamydiales</taxon>
        <taxon>Chlamydiaceae</taxon>
        <taxon>Chlamydia/Chlamydophila group</taxon>
        <taxon>Chlamydia</taxon>
    </lineage>
</organism>
<comment type="function">
    <text evidence="1">Binds directly to 16S ribosomal RNA.</text>
</comment>
<comment type="similarity">
    <text evidence="1">Belongs to the bacterial ribosomal protein bS20 family.</text>
</comment>
<accession>Q5L4N6</accession>
<protein>
    <recommendedName>
        <fullName evidence="1">Small ribosomal subunit protein bS20</fullName>
    </recommendedName>
    <alternativeName>
        <fullName evidence="3">30S ribosomal protein S20</fullName>
    </alternativeName>
</protein>
<feature type="chain" id="PRO_0000224960" description="Small ribosomal subunit protein bS20">
    <location>
        <begin position="1"/>
        <end position="98"/>
    </location>
</feature>
<feature type="region of interest" description="Disordered" evidence="2">
    <location>
        <begin position="1"/>
        <end position="21"/>
    </location>
</feature>
<feature type="compositionally biased region" description="Basic residues" evidence="2">
    <location>
        <begin position="1"/>
        <end position="15"/>
    </location>
</feature>
<sequence>MAPKKTTKKGGPKKRPSAEKRIITSQKRCLINQSFKSKAKTMMKKFEAALKAGDQTSIASGLQLVYSVVDKAVKRGILKHNKAARIKSRATLRANAKI</sequence>
<proteinExistence type="inferred from homology"/>
<dbReference type="EMBL" id="CR848038">
    <property type="protein sequence ID" value="CAH64411.1"/>
    <property type="molecule type" value="Genomic_DNA"/>
</dbReference>
<dbReference type="RefSeq" id="WP_011097459.1">
    <property type="nucleotide sequence ID" value="NC_004552.2"/>
</dbReference>
<dbReference type="SMR" id="Q5L4N6"/>
<dbReference type="KEGG" id="cab:CAB973"/>
<dbReference type="eggNOG" id="COG0268">
    <property type="taxonomic scope" value="Bacteria"/>
</dbReference>
<dbReference type="HOGENOM" id="CLU_160655_2_0_0"/>
<dbReference type="OrthoDB" id="21589at2"/>
<dbReference type="Proteomes" id="UP000001012">
    <property type="component" value="Chromosome"/>
</dbReference>
<dbReference type="GO" id="GO:0005829">
    <property type="term" value="C:cytosol"/>
    <property type="evidence" value="ECO:0007669"/>
    <property type="project" value="TreeGrafter"/>
</dbReference>
<dbReference type="GO" id="GO:0015935">
    <property type="term" value="C:small ribosomal subunit"/>
    <property type="evidence" value="ECO:0007669"/>
    <property type="project" value="TreeGrafter"/>
</dbReference>
<dbReference type="GO" id="GO:0070181">
    <property type="term" value="F:small ribosomal subunit rRNA binding"/>
    <property type="evidence" value="ECO:0007669"/>
    <property type="project" value="TreeGrafter"/>
</dbReference>
<dbReference type="GO" id="GO:0003735">
    <property type="term" value="F:structural constituent of ribosome"/>
    <property type="evidence" value="ECO:0007669"/>
    <property type="project" value="InterPro"/>
</dbReference>
<dbReference type="GO" id="GO:0006412">
    <property type="term" value="P:translation"/>
    <property type="evidence" value="ECO:0007669"/>
    <property type="project" value="UniProtKB-UniRule"/>
</dbReference>
<dbReference type="Gene3D" id="1.20.58.110">
    <property type="entry name" value="Ribosomal protein S20"/>
    <property type="match status" value="1"/>
</dbReference>
<dbReference type="HAMAP" id="MF_00500">
    <property type="entry name" value="Ribosomal_bS20"/>
    <property type="match status" value="1"/>
</dbReference>
<dbReference type="InterPro" id="IPR002583">
    <property type="entry name" value="Ribosomal_bS20"/>
</dbReference>
<dbReference type="InterPro" id="IPR036510">
    <property type="entry name" value="Ribosomal_bS20_sf"/>
</dbReference>
<dbReference type="NCBIfam" id="TIGR00029">
    <property type="entry name" value="S20"/>
    <property type="match status" value="1"/>
</dbReference>
<dbReference type="PANTHER" id="PTHR33398">
    <property type="entry name" value="30S RIBOSOMAL PROTEIN S20"/>
    <property type="match status" value="1"/>
</dbReference>
<dbReference type="PANTHER" id="PTHR33398:SF1">
    <property type="entry name" value="SMALL RIBOSOMAL SUBUNIT PROTEIN BS20C"/>
    <property type="match status" value="1"/>
</dbReference>
<dbReference type="Pfam" id="PF01649">
    <property type="entry name" value="Ribosomal_S20p"/>
    <property type="match status" value="1"/>
</dbReference>
<dbReference type="SUPFAM" id="SSF46992">
    <property type="entry name" value="Ribosomal protein S20"/>
    <property type="match status" value="1"/>
</dbReference>
<name>RS20_CHLAB</name>
<reference key="1">
    <citation type="journal article" date="2005" name="Genome Res.">
        <title>The Chlamydophila abortus genome sequence reveals an array of variable proteins that contribute to interspecies variation.</title>
        <authorList>
            <person name="Thomson N.R."/>
            <person name="Yeats C."/>
            <person name="Bell K."/>
            <person name="Holden M.T.G."/>
            <person name="Bentley S.D."/>
            <person name="Livingstone M."/>
            <person name="Cerdeno-Tarraga A.-M."/>
            <person name="Harris B."/>
            <person name="Doggett J."/>
            <person name="Ormond D."/>
            <person name="Mungall K."/>
            <person name="Clarke K."/>
            <person name="Feltwell T."/>
            <person name="Hance Z."/>
            <person name="Sanders M."/>
            <person name="Quail M.A."/>
            <person name="Price C."/>
            <person name="Barrell B.G."/>
            <person name="Parkhill J."/>
            <person name="Longbottom D."/>
        </authorList>
    </citation>
    <scope>NUCLEOTIDE SEQUENCE [LARGE SCALE GENOMIC DNA]</scope>
    <source>
        <strain>DSM 27085 / S26/3</strain>
    </source>
</reference>
<evidence type="ECO:0000255" key="1">
    <source>
        <dbReference type="HAMAP-Rule" id="MF_00500"/>
    </source>
</evidence>
<evidence type="ECO:0000256" key="2">
    <source>
        <dbReference type="SAM" id="MobiDB-lite"/>
    </source>
</evidence>
<evidence type="ECO:0000305" key="3"/>